<feature type="chain" id="PRO_0000261918" description="Nucleotide-binding protein BT9727_1064">
    <location>
        <begin position="1"/>
        <end position="163"/>
    </location>
</feature>
<gene>
    <name type="ordered locus">BT9727_1064</name>
</gene>
<sequence length="163" mass="18387">MAKDSSFDIVSKVELPEVTNAINTALKEIQNRYDFKGSKSDIKLEKEVLVLTSDDEFKLEQVKDVLISKLVKRNVPIKNLDYGKVEAAAGNTVRQRATLQQGIDKDNAKKINNIIKEMKLKVKTQVQDDQVRVTAKSRDDLQAVIAAVRSADLPIDVQFINYR</sequence>
<accession>Q6HM20</accession>
<reference key="1">
    <citation type="journal article" date="2006" name="J. Bacteriol.">
        <title>Pathogenomic sequence analysis of Bacillus cereus and Bacillus thuringiensis isolates closely related to Bacillus anthracis.</title>
        <authorList>
            <person name="Han C.S."/>
            <person name="Xie G."/>
            <person name="Challacombe J.F."/>
            <person name="Altherr M.R."/>
            <person name="Bhotika S.S."/>
            <person name="Bruce D."/>
            <person name="Campbell C.S."/>
            <person name="Campbell M.L."/>
            <person name="Chen J."/>
            <person name="Chertkov O."/>
            <person name="Cleland C."/>
            <person name="Dimitrijevic M."/>
            <person name="Doggett N.A."/>
            <person name="Fawcett J.J."/>
            <person name="Glavina T."/>
            <person name="Goodwin L.A."/>
            <person name="Hill K.K."/>
            <person name="Hitchcock P."/>
            <person name="Jackson P.J."/>
            <person name="Keim P."/>
            <person name="Kewalramani A.R."/>
            <person name="Longmire J."/>
            <person name="Lucas S."/>
            <person name="Malfatti S."/>
            <person name="McMurry K."/>
            <person name="Meincke L.J."/>
            <person name="Misra M."/>
            <person name="Moseman B.L."/>
            <person name="Mundt M."/>
            <person name="Munk A.C."/>
            <person name="Okinaka R.T."/>
            <person name="Parson-Quintana B."/>
            <person name="Reilly L.P."/>
            <person name="Richardson P."/>
            <person name="Robinson D.L."/>
            <person name="Rubin E."/>
            <person name="Saunders E."/>
            <person name="Tapia R."/>
            <person name="Tesmer J.G."/>
            <person name="Thayer N."/>
            <person name="Thompson L.S."/>
            <person name="Tice H."/>
            <person name="Ticknor L.O."/>
            <person name="Wills P.L."/>
            <person name="Brettin T.S."/>
            <person name="Gilna P."/>
        </authorList>
    </citation>
    <scope>NUCLEOTIDE SEQUENCE [LARGE SCALE GENOMIC DNA]</scope>
    <source>
        <strain>97-27</strain>
    </source>
</reference>
<comment type="function">
    <text evidence="1">Nucleotide-binding protein.</text>
</comment>
<comment type="similarity">
    <text evidence="1">Belongs to the YajQ family.</text>
</comment>
<keyword id="KW-0547">Nucleotide-binding</keyword>
<protein>
    <recommendedName>
        <fullName evidence="1">Nucleotide-binding protein BT9727_1064</fullName>
    </recommendedName>
</protein>
<evidence type="ECO:0000255" key="1">
    <source>
        <dbReference type="HAMAP-Rule" id="MF_00632"/>
    </source>
</evidence>
<dbReference type="EMBL" id="AE017355">
    <property type="protein sequence ID" value="AAT61341.1"/>
    <property type="molecule type" value="Genomic_DNA"/>
</dbReference>
<dbReference type="RefSeq" id="WP_001040153.1">
    <property type="nucleotide sequence ID" value="NC_005957.1"/>
</dbReference>
<dbReference type="RefSeq" id="YP_035401.1">
    <property type="nucleotide sequence ID" value="NC_005957.1"/>
</dbReference>
<dbReference type="SMR" id="Q6HM20"/>
<dbReference type="KEGG" id="btk:BT9727_1064"/>
<dbReference type="PATRIC" id="fig|281309.8.peg.1118"/>
<dbReference type="HOGENOM" id="CLU_099839_1_0_9"/>
<dbReference type="Proteomes" id="UP000001301">
    <property type="component" value="Chromosome"/>
</dbReference>
<dbReference type="GO" id="GO:0005829">
    <property type="term" value="C:cytosol"/>
    <property type="evidence" value="ECO:0007669"/>
    <property type="project" value="TreeGrafter"/>
</dbReference>
<dbReference type="GO" id="GO:0000166">
    <property type="term" value="F:nucleotide binding"/>
    <property type="evidence" value="ECO:0007669"/>
    <property type="project" value="TreeGrafter"/>
</dbReference>
<dbReference type="CDD" id="cd11740">
    <property type="entry name" value="YajQ_like"/>
    <property type="match status" value="1"/>
</dbReference>
<dbReference type="FunFam" id="3.30.70.990:FF:000002">
    <property type="entry name" value="UPF0234 protein LEP1GSC067_4943"/>
    <property type="match status" value="1"/>
</dbReference>
<dbReference type="FunFam" id="3.30.70.860:FF:000003">
    <property type="entry name" value="UPF0234 protein YBT020_06460"/>
    <property type="match status" value="1"/>
</dbReference>
<dbReference type="Gene3D" id="3.30.70.860">
    <property type="match status" value="1"/>
</dbReference>
<dbReference type="Gene3D" id="3.30.70.990">
    <property type="entry name" value="YajQ-like, domain 2"/>
    <property type="match status" value="1"/>
</dbReference>
<dbReference type="HAMAP" id="MF_00632">
    <property type="entry name" value="YajQ"/>
    <property type="match status" value="1"/>
</dbReference>
<dbReference type="InterPro" id="IPR007551">
    <property type="entry name" value="DUF520"/>
</dbReference>
<dbReference type="InterPro" id="IPR035571">
    <property type="entry name" value="UPF0234-like_C"/>
</dbReference>
<dbReference type="InterPro" id="IPR035570">
    <property type="entry name" value="UPF0234_N"/>
</dbReference>
<dbReference type="InterPro" id="IPR036183">
    <property type="entry name" value="YajQ-like_sf"/>
</dbReference>
<dbReference type="NCBIfam" id="NF003819">
    <property type="entry name" value="PRK05412.1"/>
    <property type="match status" value="1"/>
</dbReference>
<dbReference type="PANTHER" id="PTHR30476">
    <property type="entry name" value="UPF0234 PROTEIN YAJQ"/>
    <property type="match status" value="1"/>
</dbReference>
<dbReference type="PANTHER" id="PTHR30476:SF0">
    <property type="entry name" value="UPF0234 PROTEIN YAJQ"/>
    <property type="match status" value="1"/>
</dbReference>
<dbReference type="Pfam" id="PF04461">
    <property type="entry name" value="DUF520"/>
    <property type="match status" value="1"/>
</dbReference>
<dbReference type="SUPFAM" id="SSF89963">
    <property type="entry name" value="YajQ-like"/>
    <property type="match status" value="2"/>
</dbReference>
<name>Y1064_BACHK</name>
<organism>
    <name type="scientific">Bacillus thuringiensis subsp. konkukian (strain 97-27)</name>
    <dbReference type="NCBI Taxonomy" id="281309"/>
    <lineage>
        <taxon>Bacteria</taxon>
        <taxon>Bacillati</taxon>
        <taxon>Bacillota</taxon>
        <taxon>Bacilli</taxon>
        <taxon>Bacillales</taxon>
        <taxon>Bacillaceae</taxon>
        <taxon>Bacillus</taxon>
        <taxon>Bacillus cereus group</taxon>
    </lineage>
</organism>
<proteinExistence type="inferred from homology"/>